<accession>Q9FM14</accession>
<accession>F4K7T7</accession>
<feature type="chain" id="PRO_0000299200" description="E3 ubiquitin-protein ligase SINA-like 11">
    <location>
        <begin position="1"/>
        <end position="314"/>
    </location>
</feature>
<feature type="zinc finger region" description="RING-type; degenerate">
    <location>
        <begin position="43"/>
        <end position="81"/>
    </location>
</feature>
<feature type="zinc finger region" description="SIAH-type" evidence="2">
    <location>
        <begin position="98"/>
        <end position="156"/>
    </location>
</feature>
<feature type="region of interest" description="Disordered" evidence="3">
    <location>
        <begin position="1"/>
        <end position="31"/>
    </location>
</feature>
<feature type="region of interest" description="SBD" evidence="1">
    <location>
        <begin position="95"/>
        <end position="280"/>
    </location>
</feature>
<feature type="compositionally biased region" description="Polar residues" evidence="3">
    <location>
        <begin position="1"/>
        <end position="12"/>
    </location>
</feature>
<feature type="compositionally biased region" description="Basic residues" evidence="3">
    <location>
        <begin position="13"/>
        <end position="23"/>
    </location>
</feature>
<feature type="binding site" evidence="1">
    <location>
        <position position="103"/>
    </location>
    <ligand>
        <name>Zn(2+)</name>
        <dbReference type="ChEBI" id="CHEBI:29105"/>
        <label>1</label>
    </ligand>
</feature>
<feature type="binding site" evidence="1">
    <location>
        <position position="110"/>
    </location>
    <ligand>
        <name>Zn(2+)</name>
        <dbReference type="ChEBI" id="CHEBI:29105"/>
        <label>1</label>
    </ligand>
</feature>
<feature type="binding site" evidence="1">
    <location>
        <position position="122"/>
    </location>
    <ligand>
        <name>Zn(2+)</name>
        <dbReference type="ChEBI" id="CHEBI:29105"/>
        <label>1</label>
    </ligand>
</feature>
<feature type="binding site" evidence="1">
    <location>
        <position position="126"/>
    </location>
    <ligand>
        <name>Zn(2+)</name>
        <dbReference type="ChEBI" id="CHEBI:29105"/>
        <label>1</label>
    </ligand>
</feature>
<feature type="binding site" evidence="1">
    <location>
        <position position="133"/>
    </location>
    <ligand>
        <name>Zn(2+)</name>
        <dbReference type="ChEBI" id="CHEBI:29105"/>
        <label>2</label>
    </ligand>
</feature>
<feature type="binding site" evidence="1">
    <location>
        <position position="138"/>
    </location>
    <ligand>
        <name>Zn(2+)</name>
        <dbReference type="ChEBI" id="CHEBI:29105"/>
        <label>2</label>
    </ligand>
</feature>
<feature type="binding site" evidence="1">
    <location>
        <position position="150"/>
    </location>
    <ligand>
        <name>Zn(2+)</name>
        <dbReference type="ChEBI" id="CHEBI:29105"/>
        <label>2</label>
    </ligand>
</feature>
<feature type="binding site" evidence="1">
    <location>
        <position position="155"/>
    </location>
    <ligand>
        <name>Zn(2+)</name>
        <dbReference type="ChEBI" id="CHEBI:29105"/>
        <label>2</label>
    </ligand>
</feature>
<dbReference type="EC" id="2.3.2.27"/>
<dbReference type="EMBL" id="AB009053">
    <property type="protein sequence ID" value="BAB10849.1"/>
    <property type="status" value="ALT_SEQ"/>
    <property type="molecule type" value="Genomic_DNA"/>
</dbReference>
<dbReference type="EMBL" id="CP002688">
    <property type="protein sequence ID" value="AED97659.1"/>
    <property type="status" value="ALT_SEQ"/>
    <property type="molecule type" value="Genomic_DNA"/>
</dbReference>
<dbReference type="EMBL" id="CP002688">
    <property type="protein sequence ID" value="ANM69719.1"/>
    <property type="molecule type" value="Genomic_DNA"/>
</dbReference>
<dbReference type="RefSeq" id="NP_001331378.1">
    <property type="nucleotide sequence ID" value="NM_001345561.1"/>
</dbReference>
<dbReference type="RefSeq" id="NP_201086.1">
    <property type="nucleotide sequence ID" value="NM_125675.2"/>
</dbReference>
<dbReference type="SMR" id="Q9FM14"/>
<dbReference type="STRING" id="3702.Q9FM14"/>
<dbReference type="GlyGen" id="Q9FM14">
    <property type="glycosylation" value="1 site"/>
</dbReference>
<dbReference type="PaxDb" id="3702-AT5G62800.1"/>
<dbReference type="ProteomicsDB" id="232556"/>
<dbReference type="EnsemblPlants" id="AT5G62800.2">
    <property type="protein sequence ID" value="AT5G62800.2"/>
    <property type="gene ID" value="AT5G62800"/>
</dbReference>
<dbReference type="GeneID" id="836401"/>
<dbReference type="Gramene" id="AT5G62800.2">
    <property type="protein sequence ID" value="AT5G62800.2"/>
    <property type="gene ID" value="AT5G62800"/>
</dbReference>
<dbReference type="KEGG" id="ath:AT5G62800"/>
<dbReference type="Araport" id="AT5G62800"/>
<dbReference type="TAIR" id="AT5G62800"/>
<dbReference type="eggNOG" id="KOG3002">
    <property type="taxonomic scope" value="Eukaryota"/>
</dbReference>
<dbReference type="InParanoid" id="Q9FM14"/>
<dbReference type="OMA" id="DYEITTH"/>
<dbReference type="PhylomeDB" id="Q9FM14"/>
<dbReference type="UniPathway" id="UPA00143"/>
<dbReference type="PRO" id="PR:Q9FM14"/>
<dbReference type="Proteomes" id="UP000006548">
    <property type="component" value="Chromosome 5"/>
</dbReference>
<dbReference type="ExpressionAtlas" id="Q9FM14">
    <property type="expression patterns" value="baseline and differential"/>
</dbReference>
<dbReference type="GO" id="GO:0016740">
    <property type="term" value="F:transferase activity"/>
    <property type="evidence" value="ECO:0007669"/>
    <property type="project" value="UniProtKB-KW"/>
</dbReference>
<dbReference type="GO" id="GO:0008270">
    <property type="term" value="F:zinc ion binding"/>
    <property type="evidence" value="ECO:0007669"/>
    <property type="project" value="UniProtKB-KW"/>
</dbReference>
<dbReference type="GO" id="GO:0016567">
    <property type="term" value="P:protein ubiquitination"/>
    <property type="evidence" value="ECO:0007669"/>
    <property type="project" value="UniProtKB-UniPathway"/>
</dbReference>
<dbReference type="CDD" id="cd16571">
    <property type="entry name" value="RING-HC_SIAHs"/>
    <property type="match status" value="1"/>
</dbReference>
<dbReference type="Gene3D" id="3.30.40.10">
    <property type="entry name" value="Zinc/RING finger domain, C3HC4 (zinc finger)"/>
    <property type="match status" value="1"/>
</dbReference>
<dbReference type="InterPro" id="IPR049548">
    <property type="entry name" value="Sina-like_RING"/>
</dbReference>
<dbReference type="InterPro" id="IPR044286">
    <property type="entry name" value="SINL_plant"/>
</dbReference>
<dbReference type="InterPro" id="IPR013083">
    <property type="entry name" value="Znf_RING/FYVE/PHD"/>
</dbReference>
<dbReference type="InterPro" id="IPR013010">
    <property type="entry name" value="Znf_SIAH"/>
</dbReference>
<dbReference type="PANTHER" id="PTHR46632">
    <property type="entry name" value="E3 UBIQUITIN-PROTEIN LIGASE SINA-LIKE 4"/>
    <property type="match status" value="1"/>
</dbReference>
<dbReference type="PANTHER" id="PTHR46632:SF3">
    <property type="entry name" value="E3 UBIQUITIN-PROTEIN LIGASE SINA-LIKE 7-RELATED"/>
    <property type="match status" value="1"/>
</dbReference>
<dbReference type="Pfam" id="PF21362">
    <property type="entry name" value="Sina_RING"/>
    <property type="match status" value="1"/>
</dbReference>
<dbReference type="Pfam" id="PF21361">
    <property type="entry name" value="Sina_ZnF"/>
    <property type="match status" value="1"/>
</dbReference>
<dbReference type="SUPFAM" id="SSF49599">
    <property type="entry name" value="TRAF domain-like"/>
    <property type="match status" value="1"/>
</dbReference>
<dbReference type="PROSITE" id="PS51081">
    <property type="entry name" value="ZF_SIAH"/>
    <property type="match status" value="1"/>
</dbReference>
<keyword id="KW-0479">Metal-binding</keyword>
<keyword id="KW-1185">Reference proteome</keyword>
<keyword id="KW-0808">Transferase</keyword>
<keyword id="KW-0833">Ubl conjugation pathway</keyword>
<keyword id="KW-0862">Zinc</keyword>
<keyword id="KW-0863">Zinc-finger</keyword>
<proteinExistence type="evidence at transcript level"/>
<name>SIL11_ARATH</name>
<evidence type="ECO:0000250" key="1"/>
<evidence type="ECO:0000255" key="2">
    <source>
        <dbReference type="PROSITE-ProRule" id="PRU00455"/>
    </source>
</evidence>
<evidence type="ECO:0000256" key="3">
    <source>
        <dbReference type="SAM" id="MobiDB-lite"/>
    </source>
</evidence>
<evidence type="ECO:0000305" key="4"/>
<gene>
    <name type="ordered locus">At5g62800</name>
    <name type="ORF">MQB2.12</name>
</gene>
<comment type="function">
    <text evidence="1">E3 ubiquitin-protein ligase that mediates ubiquitination and subsequent proteasomal degradation of target proteins. E3 ubiquitin ligases accept ubiquitin from an E2 ubiquitin-conjugating enzyme in the form of a thioester and then directly transfers the ubiquitin to targeted substrates. It probably triggers the ubiquitin-mediated degradation of different substrates.</text>
</comment>
<comment type="catalytic activity">
    <reaction>
        <text>S-ubiquitinyl-[E2 ubiquitin-conjugating enzyme]-L-cysteine + [acceptor protein]-L-lysine = [E2 ubiquitin-conjugating enzyme]-L-cysteine + N(6)-ubiquitinyl-[acceptor protein]-L-lysine.</text>
        <dbReference type="EC" id="2.3.2.27"/>
    </reaction>
</comment>
<comment type="pathway">
    <text>Protein modification; protein ubiquitination.</text>
</comment>
<comment type="domain">
    <text evidence="1">The RING-type zinc finger domain is essential for ubiquitin ligase activity.</text>
</comment>
<comment type="domain">
    <text evidence="1">The SBD domain (substrate-binding domain) mediates the homodimerization and the interaction with substrate proteins. It is related to the TRAF family.</text>
</comment>
<comment type="similarity">
    <text evidence="4">Belongs to the SINA (Seven in absentia) family.</text>
</comment>
<comment type="sequence caution" evidence="4">
    <conflict type="erroneous gene model prediction">
        <sequence resource="EMBL-CDS" id="AED97659"/>
    </conflict>
</comment>
<comment type="sequence caution" evidence="4">
    <conflict type="erroneous gene model prediction">
        <sequence resource="EMBL-CDS" id="BAB10849"/>
    </conflict>
</comment>
<organism>
    <name type="scientific">Arabidopsis thaliana</name>
    <name type="common">Mouse-ear cress</name>
    <dbReference type="NCBI Taxonomy" id="3702"/>
    <lineage>
        <taxon>Eukaryota</taxon>
        <taxon>Viridiplantae</taxon>
        <taxon>Streptophyta</taxon>
        <taxon>Embryophyta</taxon>
        <taxon>Tracheophyta</taxon>
        <taxon>Spermatophyta</taxon>
        <taxon>Magnoliopsida</taxon>
        <taxon>eudicotyledons</taxon>
        <taxon>Gunneridae</taxon>
        <taxon>Pentapetalae</taxon>
        <taxon>rosids</taxon>
        <taxon>malvids</taxon>
        <taxon>Brassicales</taxon>
        <taxon>Brassicaceae</taxon>
        <taxon>Camelineae</taxon>
        <taxon>Arabidopsis</taxon>
    </lineage>
</organism>
<sequence length="314" mass="35880">MEDSNSHPQNQTSKRKSSHPQKKQRMENETRSAKLLDLDVLDCPVCFEPLTIPTFQCDDGHIVCNFCFAKVSNKCPGPGCDLPIGNKRCFAMERVLESAFVPCQNTEFGCTKSVSYEKVSSHEKECNYSQCSCPNLECNYTGSYNIIYGHFMRRHLYNSTIVSSKWGYSTVDVLINIKEKVSVLWESRQKLLFVVQCFKERHGVYVTVRRIAPPASEFKKFSYRLSYSIDGHNVTYESPEVKRLLEVNSQIPDDSFMFVPNCLLHGFLIKPANEVQQVTIAQETVMEDPPTSLFKNSVPIREDQIQNAITNSIR</sequence>
<reference key="1">
    <citation type="journal article" date="1998" name="DNA Res.">
        <title>Structural analysis of Arabidopsis thaliana chromosome 5. IV. Sequence features of the regions of 1,456,315 bp covered by nineteen physically assigned P1 and TAC clones.</title>
        <authorList>
            <person name="Sato S."/>
            <person name="Kaneko T."/>
            <person name="Kotani H."/>
            <person name="Nakamura Y."/>
            <person name="Asamizu E."/>
            <person name="Miyajima N."/>
            <person name="Tabata S."/>
        </authorList>
    </citation>
    <scope>NUCLEOTIDE SEQUENCE [LARGE SCALE GENOMIC DNA]</scope>
    <source>
        <strain>cv. Columbia</strain>
    </source>
</reference>
<reference key="2">
    <citation type="journal article" date="2017" name="Plant J.">
        <title>Araport11: a complete reannotation of the Arabidopsis thaliana reference genome.</title>
        <authorList>
            <person name="Cheng C.Y."/>
            <person name="Krishnakumar V."/>
            <person name="Chan A.P."/>
            <person name="Thibaud-Nissen F."/>
            <person name="Schobel S."/>
            <person name="Town C.D."/>
        </authorList>
    </citation>
    <scope>GENOME REANNOTATION</scope>
    <source>
        <strain>cv. Columbia</strain>
    </source>
</reference>
<protein>
    <recommendedName>
        <fullName>E3 ubiquitin-protein ligase SINA-like 11</fullName>
        <ecNumber>2.3.2.27</ecNumber>
    </recommendedName>
    <alternativeName>
        <fullName evidence="4">RING-type E3 ubiquitin transferase SINA-like 11</fullName>
    </alternativeName>
    <alternativeName>
        <fullName>Seven in absentia-like protein 11</fullName>
    </alternativeName>
</protein>